<accession>B0U0T6</accession>
<evidence type="ECO:0000255" key="1">
    <source>
        <dbReference type="HAMAP-Rule" id="MF_00375"/>
    </source>
</evidence>
<reference key="1">
    <citation type="submission" date="2007-12" db="EMBL/GenBank/DDBJ databases">
        <title>Complete sequence of chromosome of Francisella philomiragia subsp. philomiragia ATCC 25017.</title>
        <authorList>
            <consortium name="US DOE Joint Genome Institute"/>
            <person name="Copeland A."/>
            <person name="Lucas S."/>
            <person name="Lapidus A."/>
            <person name="Barry K."/>
            <person name="Detter J.C."/>
            <person name="Glavina del Rio T."/>
            <person name="Hammon N."/>
            <person name="Israni S."/>
            <person name="Dalin E."/>
            <person name="Tice H."/>
            <person name="Pitluck S."/>
            <person name="Chain P."/>
            <person name="Malfatti S."/>
            <person name="Shin M."/>
            <person name="Vergez L."/>
            <person name="Schmutz J."/>
            <person name="Larimer F."/>
            <person name="Land M."/>
            <person name="Hauser L."/>
            <person name="Richardson P."/>
        </authorList>
    </citation>
    <scope>NUCLEOTIDE SEQUENCE [LARGE SCALE GENOMIC DNA]</scope>
    <source>
        <strain>ATCC 25017 / CCUG 19701 / FSC 153 / O#319-036</strain>
    </source>
</reference>
<name>GSA_FRAP2</name>
<protein>
    <recommendedName>
        <fullName evidence="1">Glutamate-1-semialdehyde 2,1-aminomutase</fullName>
        <shortName evidence="1">GSA</shortName>
        <ecNumber evidence="1">5.4.3.8</ecNumber>
    </recommendedName>
    <alternativeName>
        <fullName evidence="1">Glutamate-1-semialdehyde aminotransferase</fullName>
        <shortName evidence="1">GSA-AT</shortName>
    </alternativeName>
</protein>
<feature type="chain" id="PRO_1000079923" description="Glutamate-1-semialdehyde 2,1-aminomutase">
    <location>
        <begin position="1"/>
        <end position="433"/>
    </location>
</feature>
<feature type="modified residue" description="N6-(pyridoxal phosphate)lysine" evidence="1">
    <location>
        <position position="269"/>
    </location>
</feature>
<comment type="catalytic activity">
    <reaction evidence="1">
        <text>(S)-4-amino-5-oxopentanoate = 5-aminolevulinate</text>
        <dbReference type="Rhea" id="RHEA:14265"/>
        <dbReference type="ChEBI" id="CHEBI:57501"/>
        <dbReference type="ChEBI" id="CHEBI:356416"/>
        <dbReference type="EC" id="5.4.3.8"/>
    </reaction>
</comment>
<comment type="cofactor">
    <cofactor evidence="1">
        <name>pyridoxal 5'-phosphate</name>
        <dbReference type="ChEBI" id="CHEBI:597326"/>
    </cofactor>
</comment>
<comment type="pathway">
    <text evidence="1">Porphyrin-containing compound metabolism; protoporphyrin-IX biosynthesis; 5-aminolevulinate from L-glutamyl-tRNA(Glu): step 2/2.</text>
</comment>
<comment type="subunit">
    <text evidence="1">Homodimer.</text>
</comment>
<comment type="subcellular location">
    <subcellularLocation>
        <location evidence="1">Cytoplasm</location>
    </subcellularLocation>
</comment>
<comment type="similarity">
    <text evidence="1">Belongs to the class-III pyridoxal-phosphate-dependent aminotransferase family. HemL subfamily.</text>
</comment>
<dbReference type="EC" id="5.4.3.8" evidence="1"/>
<dbReference type="EMBL" id="CP000937">
    <property type="protein sequence ID" value="ABZ88039.1"/>
    <property type="molecule type" value="Genomic_DNA"/>
</dbReference>
<dbReference type="SMR" id="B0U0T6"/>
<dbReference type="KEGG" id="fph:Fphi_1812"/>
<dbReference type="eggNOG" id="COG0001">
    <property type="taxonomic scope" value="Bacteria"/>
</dbReference>
<dbReference type="HOGENOM" id="CLU_016922_1_5_6"/>
<dbReference type="UniPathway" id="UPA00251">
    <property type="reaction ID" value="UER00317"/>
</dbReference>
<dbReference type="GO" id="GO:0005737">
    <property type="term" value="C:cytoplasm"/>
    <property type="evidence" value="ECO:0007669"/>
    <property type="project" value="UniProtKB-SubCell"/>
</dbReference>
<dbReference type="GO" id="GO:0042286">
    <property type="term" value="F:glutamate-1-semialdehyde 2,1-aminomutase activity"/>
    <property type="evidence" value="ECO:0007669"/>
    <property type="project" value="UniProtKB-UniRule"/>
</dbReference>
<dbReference type="GO" id="GO:0030170">
    <property type="term" value="F:pyridoxal phosphate binding"/>
    <property type="evidence" value="ECO:0007669"/>
    <property type="project" value="InterPro"/>
</dbReference>
<dbReference type="GO" id="GO:0008483">
    <property type="term" value="F:transaminase activity"/>
    <property type="evidence" value="ECO:0007669"/>
    <property type="project" value="InterPro"/>
</dbReference>
<dbReference type="GO" id="GO:0006782">
    <property type="term" value="P:protoporphyrinogen IX biosynthetic process"/>
    <property type="evidence" value="ECO:0007669"/>
    <property type="project" value="UniProtKB-UniRule"/>
</dbReference>
<dbReference type="CDD" id="cd00610">
    <property type="entry name" value="OAT_like"/>
    <property type="match status" value="1"/>
</dbReference>
<dbReference type="FunFam" id="3.40.640.10:FF:000021">
    <property type="entry name" value="Glutamate-1-semialdehyde 2,1-aminomutase"/>
    <property type="match status" value="1"/>
</dbReference>
<dbReference type="Gene3D" id="3.90.1150.10">
    <property type="entry name" value="Aspartate Aminotransferase, domain 1"/>
    <property type="match status" value="1"/>
</dbReference>
<dbReference type="Gene3D" id="3.40.640.10">
    <property type="entry name" value="Type I PLP-dependent aspartate aminotransferase-like (Major domain)"/>
    <property type="match status" value="1"/>
</dbReference>
<dbReference type="HAMAP" id="MF_00375">
    <property type="entry name" value="HemL_aminotrans_3"/>
    <property type="match status" value="1"/>
</dbReference>
<dbReference type="InterPro" id="IPR004639">
    <property type="entry name" value="4pyrrol_synth_GluAld_NH2Trfase"/>
</dbReference>
<dbReference type="InterPro" id="IPR005814">
    <property type="entry name" value="Aminotrans_3"/>
</dbReference>
<dbReference type="InterPro" id="IPR049704">
    <property type="entry name" value="Aminotrans_3_PPA_site"/>
</dbReference>
<dbReference type="InterPro" id="IPR015424">
    <property type="entry name" value="PyrdxlP-dep_Trfase"/>
</dbReference>
<dbReference type="InterPro" id="IPR015421">
    <property type="entry name" value="PyrdxlP-dep_Trfase_major"/>
</dbReference>
<dbReference type="InterPro" id="IPR015422">
    <property type="entry name" value="PyrdxlP-dep_Trfase_small"/>
</dbReference>
<dbReference type="NCBIfam" id="TIGR00713">
    <property type="entry name" value="hemL"/>
    <property type="match status" value="1"/>
</dbReference>
<dbReference type="NCBIfam" id="NF000818">
    <property type="entry name" value="PRK00062.1"/>
    <property type="match status" value="1"/>
</dbReference>
<dbReference type="PANTHER" id="PTHR43713">
    <property type="entry name" value="GLUTAMATE-1-SEMIALDEHYDE 2,1-AMINOMUTASE"/>
    <property type="match status" value="1"/>
</dbReference>
<dbReference type="PANTHER" id="PTHR43713:SF3">
    <property type="entry name" value="GLUTAMATE-1-SEMIALDEHYDE 2,1-AMINOMUTASE 1, CHLOROPLASTIC-RELATED"/>
    <property type="match status" value="1"/>
</dbReference>
<dbReference type="Pfam" id="PF00202">
    <property type="entry name" value="Aminotran_3"/>
    <property type="match status" value="1"/>
</dbReference>
<dbReference type="SUPFAM" id="SSF53383">
    <property type="entry name" value="PLP-dependent transferases"/>
    <property type="match status" value="1"/>
</dbReference>
<dbReference type="PROSITE" id="PS00600">
    <property type="entry name" value="AA_TRANSFER_CLASS_3"/>
    <property type="match status" value="1"/>
</dbReference>
<gene>
    <name evidence="1" type="primary">hemL</name>
    <name type="ordered locus">Fphi_1812</name>
</gene>
<sequence length="433" mass="47506">MENKINSQSLFQEALQYIPGGVNSPVRAFKSVGQEFPRFIKSAKGAYLYDVDWNKYIDYIGSWGPMILGHGDDDVLEAIQCQLKNGLSYGAPCKQEIELAKKIVELMPNIEQVRFVNSGTEATMSAIRLARAYTGRNKIIKFEGCYHGHADEFLVAAGSGALSLGQPNSPGVPEDVVKDTLVASFNDIESIQALFEKYKNEIACIIVEPIAGNMNMIFPQDDFLAKLRAVCDENNSLLIFDEVMTGFRVALGGAQSIYDVKPDLTTLGKVIGGGMPVGAFGGRKEIMQEVSPAGPVYQAGTLSGNPIAMAAGIKTLEKVSQDDFFVKLEAKAKQLVDGLNEAARVYDFNFHAKYLGGMFGLFFCNEKVAVNTFTDLGKTNLKMFNKYFAYMLDNGVYLAPSAYEAGFISIAHSDEDIEKTICLTKKFFQDNQS</sequence>
<proteinExistence type="inferred from homology"/>
<organism>
    <name type="scientific">Francisella philomiragia subsp. philomiragia (strain ATCC 25017 / CCUG 19701 / FSC 153 / O#319-036)</name>
    <dbReference type="NCBI Taxonomy" id="484022"/>
    <lineage>
        <taxon>Bacteria</taxon>
        <taxon>Pseudomonadati</taxon>
        <taxon>Pseudomonadota</taxon>
        <taxon>Gammaproteobacteria</taxon>
        <taxon>Thiotrichales</taxon>
        <taxon>Francisellaceae</taxon>
        <taxon>Francisella</taxon>
    </lineage>
</organism>
<keyword id="KW-0963">Cytoplasm</keyword>
<keyword id="KW-0413">Isomerase</keyword>
<keyword id="KW-0627">Porphyrin biosynthesis</keyword>
<keyword id="KW-0663">Pyridoxal phosphate</keyword>